<proteinExistence type="inferred from homology"/>
<accession>A6TJD5</accession>
<sequence>MRTIKIGSRASQLALVQAEIIINMLKEKFPQYTYEIIKITTLGDRILDKTLDKIGGKGLFVKEIQKALAEEKIDLAIHSMKDMPGETPEELVLGAITKREDPRDVLITRENKSLEELPKGAVIGSSSLRRQAQVMALRGDIKVVPIRGNVGTRLGKIETESLDGVILAAAGLNRLGLKEKISSYLEIEDFTPAVGQGALGCEARRKDIEMLEMLLAINHEETYRCVMAERAFLKLLEGGCHVPIGAYGQQQGQELHMTGMVASSDGRRVIKEQVMGDIADFQALGIQLGETLIEKGAKEILETVNTDNRIVNTEGS</sequence>
<name>HEM3_ALKMQ</name>
<dbReference type="EC" id="2.5.1.61" evidence="1"/>
<dbReference type="EMBL" id="CP000724">
    <property type="protein sequence ID" value="ABR46303.1"/>
    <property type="molecule type" value="Genomic_DNA"/>
</dbReference>
<dbReference type="RefSeq" id="WP_011971212.1">
    <property type="nucleotide sequence ID" value="NC_009633.1"/>
</dbReference>
<dbReference type="SMR" id="A6TJD5"/>
<dbReference type="STRING" id="293826.Amet_0060"/>
<dbReference type="KEGG" id="amt:Amet_0060"/>
<dbReference type="eggNOG" id="COG0181">
    <property type="taxonomic scope" value="Bacteria"/>
</dbReference>
<dbReference type="HOGENOM" id="CLU_019704_0_2_9"/>
<dbReference type="OrthoDB" id="9810298at2"/>
<dbReference type="UniPathway" id="UPA00251">
    <property type="reaction ID" value="UER00319"/>
</dbReference>
<dbReference type="Proteomes" id="UP000001572">
    <property type="component" value="Chromosome"/>
</dbReference>
<dbReference type="GO" id="GO:0005737">
    <property type="term" value="C:cytoplasm"/>
    <property type="evidence" value="ECO:0007669"/>
    <property type="project" value="TreeGrafter"/>
</dbReference>
<dbReference type="GO" id="GO:0004418">
    <property type="term" value="F:hydroxymethylbilane synthase activity"/>
    <property type="evidence" value="ECO:0007669"/>
    <property type="project" value="UniProtKB-UniRule"/>
</dbReference>
<dbReference type="GO" id="GO:0006782">
    <property type="term" value="P:protoporphyrinogen IX biosynthetic process"/>
    <property type="evidence" value="ECO:0007669"/>
    <property type="project" value="UniProtKB-UniRule"/>
</dbReference>
<dbReference type="CDD" id="cd13646">
    <property type="entry name" value="PBP2_EcHMBS_like"/>
    <property type="match status" value="1"/>
</dbReference>
<dbReference type="FunFam" id="3.30.160.40:FF:000002">
    <property type="entry name" value="Porphobilinogen deaminase"/>
    <property type="match status" value="1"/>
</dbReference>
<dbReference type="FunFam" id="3.40.190.10:FF:000004">
    <property type="entry name" value="Porphobilinogen deaminase"/>
    <property type="match status" value="1"/>
</dbReference>
<dbReference type="FunFam" id="3.40.190.10:FF:000005">
    <property type="entry name" value="Porphobilinogen deaminase"/>
    <property type="match status" value="1"/>
</dbReference>
<dbReference type="Gene3D" id="3.40.190.10">
    <property type="entry name" value="Periplasmic binding protein-like II"/>
    <property type="match status" value="2"/>
</dbReference>
<dbReference type="Gene3D" id="3.30.160.40">
    <property type="entry name" value="Porphobilinogen deaminase, C-terminal domain"/>
    <property type="match status" value="1"/>
</dbReference>
<dbReference type="HAMAP" id="MF_00260">
    <property type="entry name" value="Porphobil_deam"/>
    <property type="match status" value="1"/>
</dbReference>
<dbReference type="InterPro" id="IPR000860">
    <property type="entry name" value="HemC"/>
</dbReference>
<dbReference type="InterPro" id="IPR022419">
    <property type="entry name" value="Porphobilin_deaminase_cofac_BS"/>
</dbReference>
<dbReference type="InterPro" id="IPR022417">
    <property type="entry name" value="Porphobilin_deaminase_N"/>
</dbReference>
<dbReference type="InterPro" id="IPR022418">
    <property type="entry name" value="Porphobilinogen_deaminase_C"/>
</dbReference>
<dbReference type="InterPro" id="IPR036803">
    <property type="entry name" value="Porphobilinogen_deaminase_C_sf"/>
</dbReference>
<dbReference type="NCBIfam" id="TIGR00212">
    <property type="entry name" value="hemC"/>
    <property type="match status" value="1"/>
</dbReference>
<dbReference type="PANTHER" id="PTHR11557">
    <property type="entry name" value="PORPHOBILINOGEN DEAMINASE"/>
    <property type="match status" value="1"/>
</dbReference>
<dbReference type="PANTHER" id="PTHR11557:SF0">
    <property type="entry name" value="PORPHOBILINOGEN DEAMINASE"/>
    <property type="match status" value="1"/>
</dbReference>
<dbReference type="Pfam" id="PF01379">
    <property type="entry name" value="Porphobil_deam"/>
    <property type="match status" value="1"/>
</dbReference>
<dbReference type="Pfam" id="PF03900">
    <property type="entry name" value="Porphobil_deamC"/>
    <property type="match status" value="1"/>
</dbReference>
<dbReference type="PIRSF" id="PIRSF001438">
    <property type="entry name" value="4pyrrol_synth_OHMeBilane_synth"/>
    <property type="match status" value="1"/>
</dbReference>
<dbReference type="PRINTS" id="PR00151">
    <property type="entry name" value="PORPHBDMNASE"/>
</dbReference>
<dbReference type="SUPFAM" id="SSF53850">
    <property type="entry name" value="Periplasmic binding protein-like II"/>
    <property type="match status" value="1"/>
</dbReference>
<dbReference type="SUPFAM" id="SSF54782">
    <property type="entry name" value="Porphobilinogen deaminase (hydroxymethylbilane synthase), C-terminal domain"/>
    <property type="match status" value="1"/>
</dbReference>
<dbReference type="PROSITE" id="PS00533">
    <property type="entry name" value="PORPHOBILINOGEN_DEAM"/>
    <property type="match status" value="1"/>
</dbReference>
<gene>
    <name evidence="1" type="primary">hemC</name>
    <name type="ordered locus">Amet_0060</name>
</gene>
<evidence type="ECO:0000255" key="1">
    <source>
        <dbReference type="HAMAP-Rule" id="MF_00260"/>
    </source>
</evidence>
<comment type="function">
    <text evidence="1">Tetrapolymerization of the monopyrrole PBG into the hydroxymethylbilane pre-uroporphyrinogen in several discrete steps.</text>
</comment>
<comment type="catalytic activity">
    <reaction evidence="1">
        <text>4 porphobilinogen + H2O = hydroxymethylbilane + 4 NH4(+)</text>
        <dbReference type="Rhea" id="RHEA:13185"/>
        <dbReference type="ChEBI" id="CHEBI:15377"/>
        <dbReference type="ChEBI" id="CHEBI:28938"/>
        <dbReference type="ChEBI" id="CHEBI:57845"/>
        <dbReference type="ChEBI" id="CHEBI:58126"/>
        <dbReference type="EC" id="2.5.1.61"/>
    </reaction>
</comment>
<comment type="cofactor">
    <cofactor evidence="1">
        <name>dipyrromethane</name>
        <dbReference type="ChEBI" id="CHEBI:60342"/>
    </cofactor>
    <text evidence="1">Binds 1 dipyrromethane group covalently.</text>
</comment>
<comment type="pathway">
    <text evidence="1">Porphyrin-containing compound metabolism; protoporphyrin-IX biosynthesis; coproporphyrinogen-III from 5-aminolevulinate: step 2/4.</text>
</comment>
<comment type="subunit">
    <text evidence="1">Monomer.</text>
</comment>
<comment type="miscellaneous">
    <text evidence="1">The porphobilinogen subunits are added to the dipyrromethane group.</text>
</comment>
<comment type="similarity">
    <text evidence="1">Belongs to the HMBS family.</text>
</comment>
<protein>
    <recommendedName>
        <fullName evidence="1">Porphobilinogen deaminase</fullName>
        <shortName evidence="1">PBG</shortName>
        <ecNumber evidence="1">2.5.1.61</ecNumber>
    </recommendedName>
    <alternativeName>
        <fullName evidence="1">Hydroxymethylbilane synthase</fullName>
        <shortName evidence="1">HMBS</shortName>
    </alternativeName>
    <alternativeName>
        <fullName evidence="1">Pre-uroporphyrinogen synthase</fullName>
    </alternativeName>
</protein>
<keyword id="KW-0627">Porphyrin biosynthesis</keyword>
<keyword id="KW-1185">Reference proteome</keyword>
<keyword id="KW-0808">Transferase</keyword>
<organism>
    <name type="scientific">Alkaliphilus metalliredigens (strain QYMF)</name>
    <dbReference type="NCBI Taxonomy" id="293826"/>
    <lineage>
        <taxon>Bacteria</taxon>
        <taxon>Bacillati</taxon>
        <taxon>Bacillota</taxon>
        <taxon>Clostridia</taxon>
        <taxon>Peptostreptococcales</taxon>
        <taxon>Natronincolaceae</taxon>
        <taxon>Alkaliphilus</taxon>
    </lineage>
</organism>
<reference key="1">
    <citation type="journal article" date="2016" name="Genome Announc.">
        <title>Complete genome sequence of Alkaliphilus metalliredigens strain QYMF, an alkaliphilic and metal-reducing bacterium isolated from borax-contaminated leachate ponds.</title>
        <authorList>
            <person name="Hwang C."/>
            <person name="Copeland A."/>
            <person name="Lucas S."/>
            <person name="Lapidus A."/>
            <person name="Barry K."/>
            <person name="Detter J.C."/>
            <person name="Glavina Del Rio T."/>
            <person name="Hammon N."/>
            <person name="Israni S."/>
            <person name="Dalin E."/>
            <person name="Tice H."/>
            <person name="Pitluck S."/>
            <person name="Chertkov O."/>
            <person name="Brettin T."/>
            <person name="Bruce D."/>
            <person name="Han C."/>
            <person name="Schmutz J."/>
            <person name="Larimer F."/>
            <person name="Land M.L."/>
            <person name="Hauser L."/>
            <person name="Kyrpides N."/>
            <person name="Mikhailova N."/>
            <person name="Ye Q."/>
            <person name="Zhou J."/>
            <person name="Richardson P."/>
            <person name="Fields M.W."/>
        </authorList>
    </citation>
    <scope>NUCLEOTIDE SEQUENCE [LARGE SCALE GENOMIC DNA]</scope>
    <source>
        <strain>QYMF</strain>
    </source>
</reference>
<feature type="chain" id="PRO_1000114133" description="Porphobilinogen deaminase">
    <location>
        <begin position="1"/>
        <end position="316"/>
    </location>
</feature>
<feature type="modified residue" description="S-(dipyrrolylmethanemethyl)cysteine" evidence="1">
    <location>
        <position position="240"/>
    </location>
</feature>